<proteinExistence type="evidence at protein level"/>
<keyword id="KW-0067">ATP-binding</keyword>
<keyword id="KW-0418">Kinase</keyword>
<keyword id="KW-0547">Nucleotide-binding</keyword>
<keyword id="KW-0597">Phosphoprotein</keyword>
<keyword id="KW-1185">Reference proteome</keyword>
<keyword id="KW-0723">Serine/threonine-protein kinase</keyword>
<keyword id="KW-0808">Transferase</keyword>
<accession>Q9SJG9</accession>
<accession>Q945L8</accession>
<protein>
    <recommendedName>
        <fullName>Mitogen-activated protein kinase 20</fullName>
        <shortName>AtMPK20</shortName>
        <shortName>MAP kinase 20</shortName>
        <ecNumber>2.7.11.24</ecNumber>
    </recommendedName>
</protein>
<evidence type="ECO:0000250" key="1"/>
<evidence type="ECO:0000250" key="2">
    <source>
        <dbReference type="UniProtKB" id="Q39026"/>
    </source>
</evidence>
<evidence type="ECO:0000255" key="3">
    <source>
        <dbReference type="PROSITE-ProRule" id="PRU00159"/>
    </source>
</evidence>
<evidence type="ECO:0000305" key="4"/>
<gene>
    <name type="primary">MPK20</name>
    <name type="ordered locus">At2g42880</name>
    <name type="ORF">F7D19.12</name>
</gene>
<name>MPK20_ARATH</name>
<sequence length="606" mass="68775">MQQDNRKKNNLEMEFFSDYGDANRFKVQEVIGKGSYGVVCSAIDTLTGEKVAIKKIHDIFEHISDAARILREIKLLRLLRHPDIVEIKHIMLPPSRREFKDIYVVFELMESDLHQVIKANDDLTREHYQFFLYQLLRALKYIHTANVYHRDLKPKNILANANCKLKICDFGLARVAFNDTPTTIFWTDYVATRWYRAPELCGSFYSKYTPAIDIWSIGCIFAEVLMGKPLFPGKNVVHQLDLMTDLLGTPSLDTISRVRNEKARRYLTSMRKKPPIPFAQKFPNADPLSLKLLERLLAFDPKDRPTAEEALADPYFKGLAKVEREPSCQPITKMEFEFERRKVTKEDIRELISREILEYHPQLLKDHMNGADKASFLYPSAVDQFRRQFAHLEENSGKTGPVAPLERKHASLPRSTVIHSTAVARGGQPKLMNNTNTLNPETTQNIPFNHATIQAQQRNLSAAKPSTFMGPVAPFDNGRISRDAYDPRSFIRSTNLPFSQQSAATVAMGKQQERRTTMEPEKQARQISQYNRYAPDVAINIDNNPFIMARTGMNKAENISDRIIIDTNLLQATAGIGVAAAAAAAAPGGSAHRKVGAVRYGMSKMY</sequence>
<comment type="catalytic activity">
    <reaction>
        <text>L-seryl-[protein] + ATP = O-phospho-L-seryl-[protein] + ADP + H(+)</text>
        <dbReference type="Rhea" id="RHEA:17989"/>
        <dbReference type="Rhea" id="RHEA-COMP:9863"/>
        <dbReference type="Rhea" id="RHEA-COMP:11604"/>
        <dbReference type="ChEBI" id="CHEBI:15378"/>
        <dbReference type="ChEBI" id="CHEBI:29999"/>
        <dbReference type="ChEBI" id="CHEBI:30616"/>
        <dbReference type="ChEBI" id="CHEBI:83421"/>
        <dbReference type="ChEBI" id="CHEBI:456216"/>
        <dbReference type="EC" id="2.7.11.24"/>
    </reaction>
</comment>
<comment type="catalytic activity">
    <reaction>
        <text>L-threonyl-[protein] + ATP = O-phospho-L-threonyl-[protein] + ADP + H(+)</text>
        <dbReference type="Rhea" id="RHEA:46608"/>
        <dbReference type="Rhea" id="RHEA-COMP:11060"/>
        <dbReference type="Rhea" id="RHEA-COMP:11605"/>
        <dbReference type="ChEBI" id="CHEBI:15378"/>
        <dbReference type="ChEBI" id="CHEBI:30013"/>
        <dbReference type="ChEBI" id="CHEBI:30616"/>
        <dbReference type="ChEBI" id="CHEBI:61977"/>
        <dbReference type="ChEBI" id="CHEBI:456216"/>
        <dbReference type="EC" id="2.7.11.24"/>
    </reaction>
</comment>
<comment type="activity regulation">
    <text evidence="1">Activated by threonine and tyrosine phosphorylation.</text>
</comment>
<comment type="interaction">
    <interactant intactId="EBI-2358896">
        <id>Q9SJG9</id>
    </interactant>
    <interactant intactId="EBI-763232">
        <id>O80931</id>
        <label>AS1</label>
    </interactant>
    <organismsDiffer>false</organismsDiffer>
    <experiments>3</experiments>
</comment>
<comment type="interaction">
    <interactant intactId="EBI-2358896">
        <id>Q9SJG9</id>
    </interactant>
    <interactant intactId="EBI-4426649">
        <id>Q17TI5</id>
        <label>BRX</label>
    </interactant>
    <organismsDiffer>false</organismsDiffer>
    <experiments>5</experiments>
</comment>
<comment type="interaction">
    <interactant intactId="EBI-2358896">
        <id>Q9SJG9</id>
    </interactant>
    <interactant intactId="EBI-963606">
        <id>Q9LQT8</id>
        <label>GAI</label>
    </interactant>
    <organismsDiffer>false</organismsDiffer>
    <experiments>3</experiments>
</comment>
<comment type="interaction">
    <interactant intactId="EBI-2358896">
        <id>Q9SJG9</id>
    </interactant>
    <interactant intactId="EBI-2128545">
        <id>Q9FX43</id>
        <label>MKK9</label>
    </interactant>
    <organismsDiffer>false</organismsDiffer>
    <experiments>2</experiments>
</comment>
<comment type="interaction">
    <interactant intactId="EBI-2358896">
        <id>Q9SJG9</id>
    </interactant>
    <interactant intactId="EBI-25506855">
        <id>O23160</id>
        <label>MYB73</label>
    </interactant>
    <organismsDiffer>false</organismsDiffer>
    <experiments>5</experiments>
</comment>
<comment type="interaction">
    <interactant intactId="EBI-2358896">
        <id>Q9SJG9</id>
    </interactant>
    <interactant intactId="EBI-963624">
        <id>Q9SLH3</id>
        <label>RGA</label>
    </interactant>
    <organismsDiffer>false</organismsDiffer>
    <experiments>5</experiments>
</comment>
<comment type="interaction">
    <interactant intactId="EBI-2358896">
        <id>Q9SJG9</id>
    </interactant>
    <interactant intactId="EBI-963665">
        <id>Q8GXW1</id>
        <label>RGL2</label>
    </interactant>
    <organismsDiffer>false</organismsDiffer>
    <experiments>3</experiments>
</comment>
<comment type="interaction">
    <interactant intactId="EBI-2358896">
        <id>Q9SJG9</id>
    </interactant>
    <interactant intactId="EBI-4424691">
        <id>Q93XX2</id>
        <label>SEOA</label>
    </interactant>
    <organismsDiffer>false</organismsDiffer>
    <experiments>3</experiments>
</comment>
<comment type="interaction">
    <interactant intactId="EBI-2358896">
        <id>Q9SJG9</id>
    </interactant>
    <interactant intactId="EBI-15192297">
        <id>Q9LQF0</id>
        <label>TCP23</label>
    </interactant>
    <organismsDiffer>false</organismsDiffer>
    <experiments>3</experiments>
</comment>
<comment type="domain">
    <text>The TXY motif contains the threonine and tyrosine residues whose phosphorylation activates the MAP kinases.</text>
</comment>
<comment type="PTM">
    <text evidence="1">Dually phosphorylated on Thr-187 and Tyr-189, which activates the enzyme.</text>
</comment>
<comment type="similarity">
    <text evidence="4">Belongs to the protein kinase superfamily. CMGC Ser/Thr protein kinase family. MAP kinase subfamily.</text>
</comment>
<dbReference type="EC" id="2.7.11.24"/>
<dbReference type="EMBL" id="AC006931">
    <property type="protein sequence ID" value="AAD21721.2"/>
    <property type="molecule type" value="Genomic_DNA"/>
</dbReference>
<dbReference type="EMBL" id="CP002685">
    <property type="protein sequence ID" value="AEC10180.1"/>
    <property type="molecule type" value="Genomic_DNA"/>
</dbReference>
<dbReference type="EMBL" id="AF412082">
    <property type="protein sequence ID" value="AAL06535.1"/>
    <property type="molecule type" value="mRNA"/>
</dbReference>
<dbReference type="EMBL" id="BT001021">
    <property type="protein sequence ID" value="AAN46775.1"/>
    <property type="molecule type" value="mRNA"/>
</dbReference>
<dbReference type="PIR" id="D84859">
    <property type="entry name" value="D84859"/>
</dbReference>
<dbReference type="RefSeq" id="NP_565989.1">
    <property type="nucleotide sequence ID" value="NM_129849.5"/>
</dbReference>
<dbReference type="SMR" id="Q9SJG9"/>
<dbReference type="BioGRID" id="4225">
    <property type="interactions" value="9"/>
</dbReference>
<dbReference type="FunCoup" id="Q9SJG9">
    <property type="interactions" value="1482"/>
</dbReference>
<dbReference type="IntAct" id="Q9SJG9">
    <property type="interactions" value="10"/>
</dbReference>
<dbReference type="STRING" id="3702.Q9SJG9"/>
<dbReference type="iPTMnet" id="Q9SJG9"/>
<dbReference type="PaxDb" id="3702-AT2G42880.1"/>
<dbReference type="ProteomicsDB" id="239068"/>
<dbReference type="EnsemblPlants" id="AT2G42880.1">
    <property type="protein sequence ID" value="AT2G42880.1"/>
    <property type="gene ID" value="AT2G42880"/>
</dbReference>
<dbReference type="GeneID" id="818888"/>
<dbReference type="Gramene" id="AT2G42880.1">
    <property type="protein sequence ID" value="AT2G42880.1"/>
    <property type="gene ID" value="AT2G42880"/>
</dbReference>
<dbReference type="KEGG" id="ath:AT2G42880"/>
<dbReference type="Araport" id="AT2G42880"/>
<dbReference type="TAIR" id="AT2G42880">
    <property type="gene designation" value="MPK20"/>
</dbReference>
<dbReference type="eggNOG" id="KOG0660">
    <property type="taxonomic scope" value="Eukaryota"/>
</dbReference>
<dbReference type="HOGENOM" id="CLU_000288_181_13_1"/>
<dbReference type="InParanoid" id="Q9SJG9"/>
<dbReference type="OrthoDB" id="2396at2759"/>
<dbReference type="PhylomeDB" id="Q9SJG9"/>
<dbReference type="PRO" id="PR:Q9SJG9"/>
<dbReference type="Proteomes" id="UP000006548">
    <property type="component" value="Chromosome 2"/>
</dbReference>
<dbReference type="ExpressionAtlas" id="Q9SJG9">
    <property type="expression patterns" value="baseline and differential"/>
</dbReference>
<dbReference type="GO" id="GO:0005524">
    <property type="term" value="F:ATP binding"/>
    <property type="evidence" value="ECO:0007669"/>
    <property type="project" value="UniProtKB-KW"/>
</dbReference>
<dbReference type="GO" id="GO:0004707">
    <property type="term" value="F:MAP kinase activity"/>
    <property type="evidence" value="ECO:0000250"/>
    <property type="project" value="TAIR"/>
</dbReference>
<dbReference type="GO" id="GO:0106310">
    <property type="term" value="F:protein serine kinase activity"/>
    <property type="evidence" value="ECO:0007669"/>
    <property type="project" value="RHEA"/>
</dbReference>
<dbReference type="CDD" id="cd07859">
    <property type="entry name" value="STKc_TDY_MAPK"/>
    <property type="match status" value="1"/>
</dbReference>
<dbReference type="FunFam" id="1.10.510.10:FF:000017">
    <property type="entry name" value="Mitogen-activated protein kinase"/>
    <property type="match status" value="1"/>
</dbReference>
<dbReference type="FunFam" id="3.30.200.20:FF:000046">
    <property type="entry name" value="Mitogen-activated protein kinase"/>
    <property type="match status" value="1"/>
</dbReference>
<dbReference type="Gene3D" id="3.30.200.20">
    <property type="entry name" value="Phosphorylase Kinase, domain 1"/>
    <property type="match status" value="1"/>
</dbReference>
<dbReference type="Gene3D" id="1.10.510.10">
    <property type="entry name" value="Transferase(Phosphotransferase) domain 1"/>
    <property type="match status" value="1"/>
</dbReference>
<dbReference type="InterPro" id="IPR011009">
    <property type="entry name" value="Kinase-like_dom_sf"/>
</dbReference>
<dbReference type="InterPro" id="IPR050117">
    <property type="entry name" value="MAP_kinase"/>
</dbReference>
<dbReference type="InterPro" id="IPR003527">
    <property type="entry name" value="MAP_kinase_CS"/>
</dbReference>
<dbReference type="InterPro" id="IPR000719">
    <property type="entry name" value="Prot_kinase_dom"/>
</dbReference>
<dbReference type="InterPro" id="IPR017441">
    <property type="entry name" value="Protein_kinase_ATP_BS"/>
</dbReference>
<dbReference type="PANTHER" id="PTHR24055">
    <property type="entry name" value="MITOGEN-ACTIVATED PROTEIN KINASE"/>
    <property type="match status" value="1"/>
</dbReference>
<dbReference type="Pfam" id="PF00069">
    <property type="entry name" value="Pkinase"/>
    <property type="match status" value="1"/>
</dbReference>
<dbReference type="SMART" id="SM00220">
    <property type="entry name" value="S_TKc"/>
    <property type="match status" value="1"/>
</dbReference>
<dbReference type="SUPFAM" id="SSF56112">
    <property type="entry name" value="Protein kinase-like (PK-like)"/>
    <property type="match status" value="1"/>
</dbReference>
<dbReference type="PROSITE" id="PS01351">
    <property type="entry name" value="MAPK"/>
    <property type="match status" value="1"/>
</dbReference>
<dbReference type="PROSITE" id="PS00107">
    <property type="entry name" value="PROTEIN_KINASE_ATP"/>
    <property type="match status" value="1"/>
</dbReference>
<dbReference type="PROSITE" id="PS50011">
    <property type="entry name" value="PROTEIN_KINASE_DOM"/>
    <property type="match status" value="1"/>
</dbReference>
<feature type="chain" id="PRO_0000245820" description="Mitogen-activated protein kinase 20">
    <location>
        <begin position="1"/>
        <end position="606"/>
    </location>
</feature>
<feature type="domain" description="Protein kinase" evidence="3">
    <location>
        <begin position="25"/>
        <end position="316"/>
    </location>
</feature>
<feature type="short sequence motif" description="TXY">
    <location>
        <begin position="187"/>
        <end position="189"/>
    </location>
</feature>
<feature type="active site" description="Proton acceptor" evidence="3">
    <location>
        <position position="151"/>
    </location>
</feature>
<feature type="binding site" evidence="3">
    <location>
        <begin position="31"/>
        <end position="39"/>
    </location>
    <ligand>
        <name>ATP</name>
        <dbReference type="ChEBI" id="CHEBI:30616"/>
    </ligand>
</feature>
<feature type="binding site" evidence="3">
    <location>
        <position position="54"/>
    </location>
    <ligand>
        <name>ATP</name>
        <dbReference type="ChEBI" id="CHEBI:30616"/>
    </ligand>
</feature>
<feature type="modified residue" description="Phosphothreonine" evidence="2">
    <location>
        <position position="187"/>
    </location>
</feature>
<feature type="modified residue" description="Phosphotyrosine" evidence="2">
    <location>
        <position position="189"/>
    </location>
</feature>
<feature type="modified residue" description="Phosphothreonine" evidence="2">
    <location>
        <position position="192"/>
    </location>
</feature>
<organism>
    <name type="scientific">Arabidopsis thaliana</name>
    <name type="common">Mouse-ear cress</name>
    <dbReference type="NCBI Taxonomy" id="3702"/>
    <lineage>
        <taxon>Eukaryota</taxon>
        <taxon>Viridiplantae</taxon>
        <taxon>Streptophyta</taxon>
        <taxon>Embryophyta</taxon>
        <taxon>Tracheophyta</taxon>
        <taxon>Spermatophyta</taxon>
        <taxon>Magnoliopsida</taxon>
        <taxon>eudicotyledons</taxon>
        <taxon>Gunneridae</taxon>
        <taxon>Pentapetalae</taxon>
        <taxon>rosids</taxon>
        <taxon>malvids</taxon>
        <taxon>Brassicales</taxon>
        <taxon>Brassicaceae</taxon>
        <taxon>Camelineae</taxon>
        <taxon>Arabidopsis</taxon>
    </lineage>
</organism>
<reference key="1">
    <citation type="journal article" date="1999" name="Nature">
        <title>Sequence and analysis of chromosome 2 of the plant Arabidopsis thaliana.</title>
        <authorList>
            <person name="Lin X."/>
            <person name="Kaul S."/>
            <person name="Rounsley S.D."/>
            <person name="Shea T.P."/>
            <person name="Benito M.-I."/>
            <person name="Town C.D."/>
            <person name="Fujii C.Y."/>
            <person name="Mason T.M."/>
            <person name="Bowman C.L."/>
            <person name="Barnstead M.E."/>
            <person name="Feldblyum T.V."/>
            <person name="Buell C.R."/>
            <person name="Ketchum K.A."/>
            <person name="Lee J.J."/>
            <person name="Ronning C.M."/>
            <person name="Koo H.L."/>
            <person name="Moffat K.S."/>
            <person name="Cronin L.A."/>
            <person name="Shen M."/>
            <person name="Pai G."/>
            <person name="Van Aken S."/>
            <person name="Umayam L."/>
            <person name="Tallon L.J."/>
            <person name="Gill J.E."/>
            <person name="Adams M.D."/>
            <person name="Carrera A.J."/>
            <person name="Creasy T.H."/>
            <person name="Goodman H.M."/>
            <person name="Somerville C.R."/>
            <person name="Copenhaver G.P."/>
            <person name="Preuss D."/>
            <person name="Nierman W.C."/>
            <person name="White O."/>
            <person name="Eisen J.A."/>
            <person name="Salzberg S.L."/>
            <person name="Fraser C.M."/>
            <person name="Venter J.C."/>
        </authorList>
    </citation>
    <scope>NUCLEOTIDE SEQUENCE [LARGE SCALE GENOMIC DNA]</scope>
    <source>
        <strain>cv. Columbia</strain>
    </source>
</reference>
<reference key="2">
    <citation type="journal article" date="2017" name="Plant J.">
        <title>Araport11: a complete reannotation of the Arabidopsis thaliana reference genome.</title>
        <authorList>
            <person name="Cheng C.Y."/>
            <person name="Krishnakumar V."/>
            <person name="Chan A.P."/>
            <person name="Thibaud-Nissen F."/>
            <person name="Schobel S."/>
            <person name="Town C.D."/>
        </authorList>
    </citation>
    <scope>GENOME REANNOTATION</scope>
    <source>
        <strain>cv. Columbia</strain>
    </source>
</reference>
<reference key="3">
    <citation type="journal article" date="2003" name="Science">
        <title>Empirical analysis of transcriptional activity in the Arabidopsis genome.</title>
        <authorList>
            <person name="Yamada K."/>
            <person name="Lim J."/>
            <person name="Dale J.M."/>
            <person name="Chen H."/>
            <person name="Shinn P."/>
            <person name="Palm C.J."/>
            <person name="Southwick A.M."/>
            <person name="Wu H.C."/>
            <person name="Kim C.J."/>
            <person name="Nguyen M."/>
            <person name="Pham P.K."/>
            <person name="Cheuk R.F."/>
            <person name="Karlin-Newmann G."/>
            <person name="Liu S.X."/>
            <person name="Lam B."/>
            <person name="Sakano H."/>
            <person name="Wu T."/>
            <person name="Yu G."/>
            <person name="Miranda M."/>
            <person name="Quach H.L."/>
            <person name="Tripp M."/>
            <person name="Chang C.H."/>
            <person name="Lee J.M."/>
            <person name="Toriumi M.J."/>
            <person name="Chan M.M."/>
            <person name="Tang C.C."/>
            <person name="Onodera C.S."/>
            <person name="Deng J.M."/>
            <person name="Akiyama K."/>
            <person name="Ansari Y."/>
            <person name="Arakawa T."/>
            <person name="Banh J."/>
            <person name="Banno F."/>
            <person name="Bowser L."/>
            <person name="Brooks S.Y."/>
            <person name="Carninci P."/>
            <person name="Chao Q."/>
            <person name="Choy N."/>
            <person name="Enju A."/>
            <person name="Goldsmith A.D."/>
            <person name="Gurjal M."/>
            <person name="Hansen N.F."/>
            <person name="Hayashizaki Y."/>
            <person name="Johnson-Hopson C."/>
            <person name="Hsuan V.W."/>
            <person name="Iida K."/>
            <person name="Karnes M."/>
            <person name="Khan S."/>
            <person name="Koesema E."/>
            <person name="Ishida J."/>
            <person name="Jiang P.X."/>
            <person name="Jones T."/>
            <person name="Kawai J."/>
            <person name="Kamiya A."/>
            <person name="Meyers C."/>
            <person name="Nakajima M."/>
            <person name="Narusaka M."/>
            <person name="Seki M."/>
            <person name="Sakurai T."/>
            <person name="Satou M."/>
            <person name="Tamse R."/>
            <person name="Vaysberg M."/>
            <person name="Wallender E.K."/>
            <person name="Wong C."/>
            <person name="Yamamura Y."/>
            <person name="Yuan S."/>
            <person name="Shinozaki K."/>
            <person name="Davis R.W."/>
            <person name="Theologis A."/>
            <person name="Ecker J.R."/>
        </authorList>
    </citation>
    <scope>NUCLEOTIDE SEQUENCE [LARGE SCALE MRNA]</scope>
    <source>
        <strain>cv. Columbia</strain>
    </source>
</reference>
<reference key="4">
    <citation type="journal article" date="2002" name="Trends Plant Sci.">
        <title>Mitogen-activated protein kinase cascades in plants: a new nomenclature.</title>
        <authorList>
            <consortium name="MAPK group"/>
        </authorList>
    </citation>
    <scope>GENE FAMILY</scope>
    <scope>NOMENCLATURE</scope>
</reference>
<reference key="5">
    <citation type="journal article" date="2006" name="Trends Plant Sci.">
        <title>Ancient signals: comparative genomics of plant MAPK and MAPKK gene families.</title>
        <authorList>
            <person name="Hamel L.P."/>
            <person name="Nicole M.C."/>
            <person name="Sritubtim S."/>
            <person name="Morency M.J."/>
            <person name="Ellis M."/>
            <person name="Ehlting J."/>
            <person name="Beaudoin N."/>
            <person name="Barbazuk B."/>
            <person name="Klessig D."/>
            <person name="Lee J."/>
            <person name="Martin G."/>
            <person name="Mundy J."/>
            <person name="Ohashi Y."/>
            <person name="Scheel D."/>
            <person name="Sheen J."/>
            <person name="Xing T."/>
            <person name="Zhang S."/>
            <person name="Seguin A."/>
            <person name="Ellis B.E."/>
        </authorList>
    </citation>
    <scope>GENE FAMILY</scope>
</reference>